<protein>
    <recommendedName>
        <fullName>DnaJ homolog subfamily C member 28</fullName>
    </recommendedName>
</protein>
<comment type="function">
    <text>May have a role in protein folding or as a chaperone.</text>
</comment>
<feature type="chain" id="PRO_0000071140" description="DnaJ homolog subfamily C member 28">
    <location>
        <begin position="1"/>
        <end position="385"/>
    </location>
</feature>
<feature type="domain" description="J" evidence="2">
    <location>
        <begin position="48"/>
        <end position="132"/>
    </location>
</feature>
<feature type="coiled-coil region" evidence="1">
    <location>
        <begin position="261"/>
        <end position="318"/>
    </location>
</feature>
<keyword id="KW-0143">Chaperone</keyword>
<keyword id="KW-0175">Coiled coil</keyword>
<keyword id="KW-1185">Reference proteome</keyword>
<dbReference type="EMBL" id="BC005604">
    <property type="protein sequence ID" value="AAH05604.1"/>
    <property type="molecule type" value="mRNA"/>
</dbReference>
<dbReference type="EMBL" id="BC020175">
    <property type="protein sequence ID" value="AAH20175.2"/>
    <property type="molecule type" value="mRNA"/>
</dbReference>
<dbReference type="CCDS" id="CCDS49911.1"/>
<dbReference type="RefSeq" id="NP_619605.2">
    <property type="nucleotide sequence ID" value="NM_138664.2"/>
</dbReference>
<dbReference type="RefSeq" id="XP_036015823.1">
    <property type="nucleotide sequence ID" value="XM_036159930.1"/>
</dbReference>
<dbReference type="SMR" id="Q8VCE1"/>
<dbReference type="BioGRID" id="232941">
    <property type="interactions" value="3"/>
</dbReference>
<dbReference type="FunCoup" id="Q8VCE1">
    <property type="interactions" value="99"/>
</dbReference>
<dbReference type="STRING" id="10090.ENSMUSP00000132288"/>
<dbReference type="PhosphoSitePlus" id="Q8VCE1"/>
<dbReference type="PaxDb" id="10090-ENSMUSP00000048113"/>
<dbReference type="ProteomicsDB" id="279715"/>
<dbReference type="Antibodypedia" id="7335">
    <property type="antibodies" value="105 antibodies from 15 providers"/>
</dbReference>
<dbReference type="DNASU" id="246738"/>
<dbReference type="Ensembl" id="ENSMUST00000049244.10">
    <property type="protein sequence ID" value="ENSMUSP00000048113.9"/>
    <property type="gene ID" value="ENSMUSG00000039763.11"/>
</dbReference>
<dbReference type="GeneID" id="246738"/>
<dbReference type="KEGG" id="mmu:246738"/>
<dbReference type="UCSC" id="uc007zxt.1">
    <property type="organism name" value="mouse"/>
</dbReference>
<dbReference type="AGR" id="MGI:2181053"/>
<dbReference type="CTD" id="54943"/>
<dbReference type="MGI" id="MGI:2181053">
    <property type="gene designation" value="Dnajc28"/>
</dbReference>
<dbReference type="VEuPathDB" id="HostDB:ENSMUSG00000039763"/>
<dbReference type="eggNOG" id="KOG0568">
    <property type="taxonomic scope" value="Eukaryota"/>
</dbReference>
<dbReference type="GeneTree" id="ENSGT00940000154065"/>
<dbReference type="HOGENOM" id="CLU_040968_1_0_1"/>
<dbReference type="InParanoid" id="Q8VCE1"/>
<dbReference type="OrthoDB" id="1922282at2759"/>
<dbReference type="PhylomeDB" id="Q8VCE1"/>
<dbReference type="TreeFam" id="TF323730"/>
<dbReference type="BioGRID-ORCS" id="246738">
    <property type="hits" value="2 hits in 78 CRISPR screens"/>
</dbReference>
<dbReference type="PRO" id="PR:Q8VCE1"/>
<dbReference type="Proteomes" id="UP000000589">
    <property type="component" value="Chromosome 16"/>
</dbReference>
<dbReference type="RNAct" id="Q8VCE1">
    <property type="molecule type" value="protein"/>
</dbReference>
<dbReference type="Bgee" id="ENSMUSG00000039763">
    <property type="expression patterns" value="Expressed in spermatocyte and 185 other cell types or tissues"/>
</dbReference>
<dbReference type="ExpressionAtlas" id="Q8VCE1">
    <property type="expression patterns" value="baseline and differential"/>
</dbReference>
<dbReference type="CDD" id="cd06257">
    <property type="entry name" value="DnaJ"/>
    <property type="match status" value="1"/>
</dbReference>
<dbReference type="FunFam" id="1.10.287.110:FF:000113">
    <property type="entry name" value="DnaJ (Hsp40) homolog, subfamily C, member 28"/>
    <property type="match status" value="1"/>
</dbReference>
<dbReference type="Gene3D" id="1.10.287.110">
    <property type="entry name" value="DnaJ domain"/>
    <property type="match status" value="1"/>
</dbReference>
<dbReference type="InterPro" id="IPR052573">
    <property type="entry name" value="DnaJ_C_subfamily_28"/>
</dbReference>
<dbReference type="InterPro" id="IPR001623">
    <property type="entry name" value="DnaJ_domain"/>
</dbReference>
<dbReference type="InterPro" id="IPR018961">
    <property type="entry name" value="DnaJ_homolog_subfam-C_membr-28"/>
</dbReference>
<dbReference type="InterPro" id="IPR036869">
    <property type="entry name" value="J_dom_sf"/>
</dbReference>
<dbReference type="PANTHER" id="PTHR39158:SF1">
    <property type="entry name" value="DNAJ HOMOLOG SUBFAMILY C MEMBER 28"/>
    <property type="match status" value="1"/>
</dbReference>
<dbReference type="PANTHER" id="PTHR39158">
    <property type="entry name" value="OS08G0560600 PROTEIN"/>
    <property type="match status" value="1"/>
</dbReference>
<dbReference type="Pfam" id="PF09350">
    <property type="entry name" value="DJC28_CD"/>
    <property type="match status" value="1"/>
</dbReference>
<dbReference type="Pfam" id="PF00226">
    <property type="entry name" value="DnaJ"/>
    <property type="match status" value="1"/>
</dbReference>
<dbReference type="SMART" id="SM00271">
    <property type="entry name" value="DnaJ"/>
    <property type="match status" value="1"/>
</dbReference>
<dbReference type="SUPFAM" id="SSF46565">
    <property type="entry name" value="Chaperone J-domain"/>
    <property type="match status" value="1"/>
</dbReference>
<dbReference type="PROSITE" id="PS50076">
    <property type="entry name" value="DNAJ_2"/>
    <property type="match status" value="1"/>
</dbReference>
<organism>
    <name type="scientific">Mus musculus</name>
    <name type="common">Mouse</name>
    <dbReference type="NCBI Taxonomy" id="10090"/>
    <lineage>
        <taxon>Eukaryota</taxon>
        <taxon>Metazoa</taxon>
        <taxon>Chordata</taxon>
        <taxon>Craniata</taxon>
        <taxon>Vertebrata</taxon>
        <taxon>Euteleostomi</taxon>
        <taxon>Mammalia</taxon>
        <taxon>Eutheria</taxon>
        <taxon>Euarchontoglires</taxon>
        <taxon>Glires</taxon>
        <taxon>Rodentia</taxon>
        <taxon>Myomorpha</taxon>
        <taxon>Muroidea</taxon>
        <taxon>Muridae</taxon>
        <taxon>Murinae</taxon>
        <taxon>Mus</taxon>
        <taxon>Mus</taxon>
    </lineage>
</organism>
<sequence>MINTVCMKTTRILRLHLTNASLIPPGIKMLSDPRSRMISTHESQKLREYYRLLNLDEGCSVDDVRESFHKLARQYHPDSGSSDADSATFIKIEEAYRNVLSHAIKRMHAGQDKAEDAAEDEEEGKFKYNTPQHRHYLSFEGVGFGTPSQREKQYRQFRADRATEQVMEYQRQKLQREFFANSITVKDVRQSKQQKITQAIERLVEDLIQESMAKGDFDNLSGKGKPLKKFSGCSYIDPMTHNLNRILIDNGYQPEWILMQKEIKDTIEQLREALLMSRKKLGNPLSPTEQKQWAQVCEQFQEKIRKLNKRINDFNLIVPILTRQKVHFDAQKEIIRVQEMYGAFVEANEVTEENQTDVSQGEESKTPRVKAGFLNWLNLWKSIKI</sequence>
<evidence type="ECO:0000255" key="1"/>
<evidence type="ECO:0000255" key="2">
    <source>
        <dbReference type="PROSITE-ProRule" id="PRU00286"/>
    </source>
</evidence>
<accession>Q8VCE1</accession>
<accession>Q99JX0</accession>
<reference key="1">
    <citation type="journal article" date="2004" name="Genome Res.">
        <title>The status, quality, and expansion of the NIH full-length cDNA project: the Mammalian Gene Collection (MGC).</title>
        <authorList>
            <consortium name="The MGC Project Team"/>
        </authorList>
    </citation>
    <scope>NUCLEOTIDE SEQUENCE [LARGE SCALE MRNA]</scope>
    <source>
        <strain>C57BL/6J</strain>
        <tissue>Mammary gland</tissue>
        <tissue>Retina</tissue>
    </source>
</reference>
<reference key="2">
    <citation type="journal article" date="2010" name="Cell">
        <title>A tissue-specific atlas of mouse protein phosphorylation and expression.</title>
        <authorList>
            <person name="Huttlin E.L."/>
            <person name="Jedrychowski M.P."/>
            <person name="Elias J.E."/>
            <person name="Goswami T."/>
            <person name="Rad R."/>
            <person name="Beausoleil S.A."/>
            <person name="Villen J."/>
            <person name="Haas W."/>
            <person name="Sowa M.E."/>
            <person name="Gygi S.P."/>
        </authorList>
    </citation>
    <scope>IDENTIFICATION BY MASS SPECTROMETRY [LARGE SCALE ANALYSIS]</scope>
    <source>
        <tissue>Heart</tissue>
    </source>
</reference>
<gene>
    <name type="primary">Dnajc28</name>
    <name type="synonym">ORF28</name>
</gene>
<proteinExistence type="evidence at protein level"/>
<name>DJC28_MOUSE</name>